<gene>
    <name type="primary">psiE</name>
    <name type="synonym">yjbA</name>
    <name type="ordered locus">b4030</name>
    <name type="ordered locus">JW3990</name>
</gene>
<dbReference type="EMBL" id="J02812">
    <property type="protein sequence ID" value="AAA79017.1"/>
    <property type="molecule type" value="Genomic_DNA"/>
</dbReference>
<dbReference type="EMBL" id="U00006">
    <property type="protein sequence ID" value="AAC43124.1"/>
    <property type="molecule type" value="Genomic_DNA"/>
</dbReference>
<dbReference type="EMBL" id="U00096">
    <property type="protein sequence ID" value="AAC77000.1"/>
    <property type="molecule type" value="Genomic_DNA"/>
</dbReference>
<dbReference type="EMBL" id="AP009048">
    <property type="protein sequence ID" value="BAE78032.1"/>
    <property type="molecule type" value="Genomic_DNA"/>
</dbReference>
<dbReference type="PIR" id="E65210">
    <property type="entry name" value="E65210"/>
</dbReference>
<dbReference type="RefSeq" id="NP_418454.1">
    <property type="nucleotide sequence ID" value="NC_000913.3"/>
</dbReference>
<dbReference type="RefSeq" id="WP_000202902.1">
    <property type="nucleotide sequence ID" value="NZ_STEB01000022.1"/>
</dbReference>
<dbReference type="SMR" id="P0A7C8"/>
<dbReference type="BioGRID" id="4263052">
    <property type="interactions" value="7"/>
</dbReference>
<dbReference type="FunCoup" id="P0A7C8">
    <property type="interactions" value="18"/>
</dbReference>
<dbReference type="STRING" id="511145.b4030"/>
<dbReference type="PaxDb" id="511145-b4030"/>
<dbReference type="EnsemblBacteria" id="AAC77000">
    <property type="protein sequence ID" value="AAC77000"/>
    <property type="gene ID" value="b4030"/>
</dbReference>
<dbReference type="GeneID" id="93777857"/>
<dbReference type="GeneID" id="948528"/>
<dbReference type="KEGG" id="ecj:JW3990"/>
<dbReference type="KEGG" id="eco:b4030"/>
<dbReference type="KEGG" id="ecoc:C3026_21775"/>
<dbReference type="PATRIC" id="fig|1411691.4.peg.2681"/>
<dbReference type="EchoBASE" id="EB1194"/>
<dbReference type="eggNOG" id="COG3223">
    <property type="taxonomic scope" value="Bacteria"/>
</dbReference>
<dbReference type="HOGENOM" id="CLU_127561_0_1_6"/>
<dbReference type="InParanoid" id="P0A7C8"/>
<dbReference type="OMA" id="HEWHQKV"/>
<dbReference type="OrthoDB" id="9792470at2"/>
<dbReference type="PhylomeDB" id="P0A7C8"/>
<dbReference type="BioCyc" id="EcoCyc:EG11209-MONOMER"/>
<dbReference type="PRO" id="PR:P0A7C8"/>
<dbReference type="Proteomes" id="UP000000625">
    <property type="component" value="Chromosome"/>
</dbReference>
<dbReference type="GO" id="GO:0005886">
    <property type="term" value="C:plasma membrane"/>
    <property type="evidence" value="ECO:0000314"/>
    <property type="project" value="EcoCyc"/>
</dbReference>
<dbReference type="GO" id="GO:0016036">
    <property type="term" value="P:cellular response to phosphate starvation"/>
    <property type="evidence" value="ECO:0007669"/>
    <property type="project" value="InterPro"/>
</dbReference>
<dbReference type="HAMAP" id="MF_01048">
    <property type="entry name" value="PsiE"/>
    <property type="match status" value="1"/>
</dbReference>
<dbReference type="InterPro" id="IPR009315">
    <property type="entry name" value="P_starv_induced_PsiE"/>
</dbReference>
<dbReference type="InterPro" id="IPR020948">
    <property type="entry name" value="P_starv_induced_PsiE-like"/>
</dbReference>
<dbReference type="NCBIfam" id="NF002764">
    <property type="entry name" value="PRK02833.1-2"/>
    <property type="match status" value="1"/>
</dbReference>
<dbReference type="NCBIfam" id="NF002765">
    <property type="entry name" value="PRK02833.1-3"/>
    <property type="match status" value="1"/>
</dbReference>
<dbReference type="NCBIfam" id="NF002767">
    <property type="entry name" value="PRK02833.1-5"/>
    <property type="match status" value="1"/>
</dbReference>
<dbReference type="PANTHER" id="PTHR37819">
    <property type="entry name" value="PROTEIN PSIE"/>
    <property type="match status" value="1"/>
</dbReference>
<dbReference type="PANTHER" id="PTHR37819:SF1">
    <property type="entry name" value="PROTEIN PSIE"/>
    <property type="match status" value="1"/>
</dbReference>
<dbReference type="Pfam" id="PF06146">
    <property type="entry name" value="PsiE"/>
    <property type="match status" value="1"/>
</dbReference>
<dbReference type="PIRSF" id="PIRSF029598">
    <property type="entry name" value="PsiE"/>
    <property type="match status" value="1"/>
</dbReference>
<comment type="subcellular location">
    <subcellularLocation>
        <location>Cell inner membrane</location>
        <topology>Multi-pass membrane protein</topology>
    </subcellularLocation>
</comment>
<comment type="induction">
    <text evidence="2">Positively regulated by PhoB and negatively regulated by the cyclic AMP-cAMP receptor protein (cAMP-CRP) complex.</text>
</comment>
<comment type="similarity">
    <text evidence="3">Belongs to the PsiE family.</text>
</comment>
<evidence type="ECO:0000255" key="1"/>
<evidence type="ECO:0000269" key="2">
    <source>
    </source>
</evidence>
<evidence type="ECO:0000305" key="3"/>
<feature type="chain" id="PRO_0000160285" description="Protein PsiE">
    <location>
        <begin position="1"/>
        <end position="136"/>
    </location>
</feature>
<feature type="topological domain" description="Cytoplasmic" evidence="1">
    <location>
        <begin position="1"/>
        <end position="14"/>
    </location>
</feature>
<feature type="transmembrane region" description="Helical" evidence="1">
    <location>
        <begin position="15"/>
        <end position="35"/>
    </location>
</feature>
<feature type="topological domain" description="Periplasmic" evidence="1">
    <location>
        <begin position="36"/>
        <end position="54"/>
    </location>
</feature>
<feature type="transmembrane region" description="Helical" evidence="1">
    <location>
        <begin position="55"/>
        <end position="75"/>
    </location>
</feature>
<feature type="topological domain" description="Cytoplasmic" evidence="1">
    <location>
        <begin position="76"/>
        <end position="81"/>
    </location>
</feature>
<feature type="transmembrane region" description="Helical" evidence="1">
    <location>
        <begin position="82"/>
        <end position="102"/>
    </location>
</feature>
<feature type="topological domain" description="Periplasmic" evidence="1">
    <location>
        <begin position="103"/>
        <end position="107"/>
    </location>
</feature>
<feature type="transmembrane region" description="Helical" evidence="1">
    <location>
        <begin position="108"/>
        <end position="128"/>
    </location>
</feature>
<feature type="topological domain" description="Cytoplasmic" evidence="1">
    <location>
        <begin position="129"/>
        <end position="136"/>
    </location>
</feature>
<reference key="1">
    <citation type="journal article" date="1987" name="J. Biol. Chem.">
        <title>The cloning and DNA sequence of the gene xylE for xylose-proton symport in Escherichia coli K12.</title>
        <authorList>
            <person name="Davis E.O."/>
            <person name="Henderson P.J.F."/>
        </authorList>
    </citation>
    <scope>NUCLEOTIDE SEQUENCE [GENOMIC DNA]</scope>
    <source>
        <strain>K12</strain>
    </source>
</reference>
<reference key="2">
    <citation type="journal article" date="1993" name="Nucleic Acids Res.">
        <title>Analysis of the Escherichia coli genome. IV. DNA sequence of the region from 89.2 to 92.8 minutes.</title>
        <authorList>
            <person name="Blattner F.R."/>
            <person name="Burland V.D."/>
            <person name="Plunkett G. III"/>
            <person name="Sofia H.J."/>
            <person name="Daniels D.L."/>
        </authorList>
    </citation>
    <scope>NUCLEOTIDE SEQUENCE [LARGE SCALE GENOMIC DNA]</scope>
    <source>
        <strain>K12 / MG1655 / ATCC 47076</strain>
    </source>
</reference>
<reference key="3">
    <citation type="journal article" date="1997" name="Science">
        <title>The complete genome sequence of Escherichia coli K-12.</title>
        <authorList>
            <person name="Blattner F.R."/>
            <person name="Plunkett G. III"/>
            <person name="Bloch C.A."/>
            <person name="Perna N.T."/>
            <person name="Burland V."/>
            <person name="Riley M."/>
            <person name="Collado-Vides J."/>
            <person name="Glasner J.D."/>
            <person name="Rode C.K."/>
            <person name="Mayhew G.F."/>
            <person name="Gregor J."/>
            <person name="Davis N.W."/>
            <person name="Kirkpatrick H.A."/>
            <person name="Goeden M.A."/>
            <person name="Rose D.J."/>
            <person name="Mau B."/>
            <person name="Shao Y."/>
        </authorList>
    </citation>
    <scope>NUCLEOTIDE SEQUENCE [LARGE SCALE GENOMIC DNA]</scope>
    <source>
        <strain>K12 / MG1655 / ATCC 47076</strain>
    </source>
</reference>
<reference key="4">
    <citation type="journal article" date="2006" name="Mol. Syst. Biol.">
        <title>Highly accurate genome sequences of Escherichia coli K-12 strains MG1655 and W3110.</title>
        <authorList>
            <person name="Hayashi K."/>
            <person name="Morooka N."/>
            <person name="Yamamoto Y."/>
            <person name="Fujita K."/>
            <person name="Isono K."/>
            <person name="Choi S."/>
            <person name="Ohtsubo E."/>
            <person name="Baba T."/>
            <person name="Wanner B.L."/>
            <person name="Mori H."/>
            <person name="Horiuchi T."/>
        </authorList>
    </citation>
    <scope>NUCLEOTIDE SEQUENCE [LARGE SCALE GENOMIC DNA]</scope>
    <source>
        <strain>K12 / W3110 / ATCC 27325 / DSM 5911</strain>
    </source>
</reference>
<reference key="5">
    <citation type="journal article" date="2000" name="J. Bacteriol.">
        <title>Dual transcriptional regulation of the Escherichia coli phosphate-starvation-inducible psiE gene of the phosphate regulon by PhoB and the cyclic AMP (cAMP)-cAMP receptor protein complex.</title>
        <authorList>
            <person name="Kim S.-K."/>
            <person name="Kimura S."/>
            <person name="Shinagawa H."/>
            <person name="Nakata A."/>
            <person name="Lee K.-S."/>
            <person name="Wanner B.L."/>
            <person name="Makino K."/>
        </authorList>
    </citation>
    <scope>TRANSCRIPTIONAL REGULATION</scope>
</reference>
<reference key="6">
    <citation type="journal article" date="2005" name="Science">
        <title>Global topology analysis of the Escherichia coli inner membrane proteome.</title>
        <authorList>
            <person name="Daley D.O."/>
            <person name="Rapp M."/>
            <person name="Granseth E."/>
            <person name="Melen K."/>
            <person name="Drew D."/>
            <person name="von Heijne G."/>
        </authorList>
    </citation>
    <scope>TOPOLOGY [LARGE SCALE ANALYSIS]</scope>
    <source>
        <strain>K12 / MG1655 / ATCC 47076</strain>
    </source>
</reference>
<proteinExistence type="evidence at protein level"/>
<name>PSIE_ECOLI</name>
<keyword id="KW-0997">Cell inner membrane</keyword>
<keyword id="KW-1003">Cell membrane</keyword>
<keyword id="KW-0472">Membrane</keyword>
<keyword id="KW-1185">Reference proteome</keyword>
<keyword id="KW-0812">Transmembrane</keyword>
<keyword id="KW-1133">Transmembrane helix</keyword>
<protein>
    <recommendedName>
        <fullName>Protein PsiE</fullName>
    </recommendedName>
</protein>
<organism>
    <name type="scientific">Escherichia coli (strain K12)</name>
    <dbReference type="NCBI Taxonomy" id="83333"/>
    <lineage>
        <taxon>Bacteria</taxon>
        <taxon>Pseudomonadati</taxon>
        <taxon>Pseudomonadota</taxon>
        <taxon>Gammaproteobacteria</taxon>
        <taxon>Enterobacterales</taxon>
        <taxon>Enterobacteriaceae</taxon>
        <taxon>Escherichia</taxon>
    </lineage>
</organism>
<accession>P0A7C8</accession>
<accession>P23896</accession>
<accession>Q2M6S4</accession>
<sequence length="136" mass="15597">MTSLSRPRVEFISTILQTVLNLGLLCLGLILVVFLGKETVHLADVLFAPEQTSKYELVEGLVVYFLYFEFIALIVKYFQSGFHFPLRYFVYIGITAIVRLIIVDHKSPLDVLIYSAAILLLVITLWLCNSKRLKRE</sequence>